<organism>
    <name type="scientific">Metamycoplasma arthritidis (strain 158L3-1)</name>
    <name type="common">Mycoplasma arthritidis</name>
    <dbReference type="NCBI Taxonomy" id="243272"/>
    <lineage>
        <taxon>Bacteria</taxon>
        <taxon>Bacillati</taxon>
        <taxon>Mycoplasmatota</taxon>
        <taxon>Mycoplasmoidales</taxon>
        <taxon>Metamycoplasmataceae</taxon>
        <taxon>Metamycoplasma</taxon>
    </lineage>
</organism>
<reference key="1">
    <citation type="journal article" date="2008" name="Infect. Immun.">
        <title>Genome of Mycoplasma arthritidis.</title>
        <authorList>
            <person name="Dybvig K."/>
            <person name="Zuhua C."/>
            <person name="Lao P."/>
            <person name="Jordan D.S."/>
            <person name="French C.T."/>
            <person name="Tu A.H."/>
            <person name="Loraine A.E."/>
        </authorList>
    </citation>
    <scope>NUCLEOTIDE SEQUENCE [LARGE SCALE GENOMIC DNA]</scope>
    <source>
        <strain>158L3-1</strain>
    </source>
</reference>
<sequence length="145" mass="15812">MELHTLKATPGSRKAKHRVGRGHAAGKGKQAGRGQSGQTKRSTVRLGFEGGQLPLFRRIPKRGFNNVNHVEYQTVNLVDLENKYSTGEVVSYETLLAKGLIKRNLPVKILAKGTLTKKLTIEIPTLSQSAKTAIEKVGGTIIEVK</sequence>
<proteinExistence type="inferred from homology"/>
<evidence type="ECO:0000255" key="1">
    <source>
        <dbReference type="HAMAP-Rule" id="MF_01341"/>
    </source>
</evidence>
<evidence type="ECO:0000256" key="2">
    <source>
        <dbReference type="SAM" id="MobiDB-lite"/>
    </source>
</evidence>
<evidence type="ECO:0000305" key="3"/>
<keyword id="KW-1185">Reference proteome</keyword>
<keyword id="KW-0687">Ribonucleoprotein</keyword>
<keyword id="KW-0689">Ribosomal protein</keyword>
<keyword id="KW-0694">RNA-binding</keyword>
<keyword id="KW-0699">rRNA-binding</keyword>
<dbReference type="EMBL" id="CP001047">
    <property type="protein sequence ID" value="ACF07281.1"/>
    <property type="molecule type" value="Genomic_DNA"/>
</dbReference>
<dbReference type="RefSeq" id="WP_012498238.1">
    <property type="nucleotide sequence ID" value="NC_011025.1"/>
</dbReference>
<dbReference type="SMR" id="B3PMM9"/>
<dbReference type="STRING" id="243272.MARTH_orf422"/>
<dbReference type="KEGG" id="mat:MARTH_orf422"/>
<dbReference type="eggNOG" id="COG0200">
    <property type="taxonomic scope" value="Bacteria"/>
</dbReference>
<dbReference type="HOGENOM" id="CLU_055188_4_1_14"/>
<dbReference type="Proteomes" id="UP000008812">
    <property type="component" value="Chromosome"/>
</dbReference>
<dbReference type="GO" id="GO:0022625">
    <property type="term" value="C:cytosolic large ribosomal subunit"/>
    <property type="evidence" value="ECO:0007669"/>
    <property type="project" value="TreeGrafter"/>
</dbReference>
<dbReference type="GO" id="GO:0019843">
    <property type="term" value="F:rRNA binding"/>
    <property type="evidence" value="ECO:0007669"/>
    <property type="project" value="UniProtKB-UniRule"/>
</dbReference>
<dbReference type="GO" id="GO:0003735">
    <property type="term" value="F:structural constituent of ribosome"/>
    <property type="evidence" value="ECO:0007669"/>
    <property type="project" value="InterPro"/>
</dbReference>
<dbReference type="GO" id="GO:0006412">
    <property type="term" value="P:translation"/>
    <property type="evidence" value="ECO:0007669"/>
    <property type="project" value="UniProtKB-UniRule"/>
</dbReference>
<dbReference type="Gene3D" id="3.100.10.10">
    <property type="match status" value="1"/>
</dbReference>
<dbReference type="HAMAP" id="MF_01341">
    <property type="entry name" value="Ribosomal_uL15"/>
    <property type="match status" value="1"/>
</dbReference>
<dbReference type="InterPro" id="IPR030878">
    <property type="entry name" value="Ribosomal_uL15"/>
</dbReference>
<dbReference type="InterPro" id="IPR021131">
    <property type="entry name" value="Ribosomal_uL15/eL18"/>
</dbReference>
<dbReference type="InterPro" id="IPR036227">
    <property type="entry name" value="Ribosomal_uL15/eL18_sf"/>
</dbReference>
<dbReference type="InterPro" id="IPR005749">
    <property type="entry name" value="Ribosomal_uL15_bac-type"/>
</dbReference>
<dbReference type="InterPro" id="IPR001196">
    <property type="entry name" value="Ribosomal_uL15_CS"/>
</dbReference>
<dbReference type="NCBIfam" id="TIGR01071">
    <property type="entry name" value="rplO_bact"/>
    <property type="match status" value="1"/>
</dbReference>
<dbReference type="PANTHER" id="PTHR12934">
    <property type="entry name" value="50S RIBOSOMAL PROTEIN L15"/>
    <property type="match status" value="1"/>
</dbReference>
<dbReference type="PANTHER" id="PTHR12934:SF11">
    <property type="entry name" value="LARGE RIBOSOMAL SUBUNIT PROTEIN UL15M"/>
    <property type="match status" value="1"/>
</dbReference>
<dbReference type="Pfam" id="PF00828">
    <property type="entry name" value="Ribosomal_L27A"/>
    <property type="match status" value="1"/>
</dbReference>
<dbReference type="SUPFAM" id="SSF52080">
    <property type="entry name" value="Ribosomal proteins L15p and L18e"/>
    <property type="match status" value="1"/>
</dbReference>
<dbReference type="PROSITE" id="PS00475">
    <property type="entry name" value="RIBOSOMAL_L15"/>
    <property type="match status" value="1"/>
</dbReference>
<comment type="function">
    <text evidence="1">Binds to the 23S rRNA.</text>
</comment>
<comment type="subunit">
    <text evidence="1">Part of the 50S ribosomal subunit.</text>
</comment>
<comment type="similarity">
    <text evidence="1">Belongs to the universal ribosomal protein uL15 family.</text>
</comment>
<protein>
    <recommendedName>
        <fullName evidence="1">Large ribosomal subunit protein uL15</fullName>
    </recommendedName>
    <alternativeName>
        <fullName evidence="3">50S ribosomal protein L15</fullName>
    </alternativeName>
</protein>
<accession>B3PMM9</accession>
<feature type="chain" id="PRO_1000142844" description="Large ribosomal subunit protein uL15">
    <location>
        <begin position="1"/>
        <end position="145"/>
    </location>
</feature>
<feature type="region of interest" description="Disordered" evidence="2">
    <location>
        <begin position="1"/>
        <end position="42"/>
    </location>
</feature>
<feature type="compositionally biased region" description="Basic residues" evidence="2">
    <location>
        <begin position="13"/>
        <end position="26"/>
    </location>
</feature>
<name>RL15_META1</name>
<gene>
    <name evidence="1" type="primary">rplO</name>
    <name type="ordered locus">MARTH_orf422</name>
</gene>